<protein>
    <recommendedName>
        <fullName evidence="1">UPF0260 protein YcgN</fullName>
    </recommendedName>
</protein>
<organism>
    <name type="scientific">Salmonella gallinarum (strain 287/91 / NCTC 13346)</name>
    <dbReference type="NCBI Taxonomy" id="550538"/>
    <lineage>
        <taxon>Bacteria</taxon>
        <taxon>Pseudomonadati</taxon>
        <taxon>Pseudomonadota</taxon>
        <taxon>Gammaproteobacteria</taxon>
        <taxon>Enterobacterales</taxon>
        <taxon>Enterobacteriaceae</taxon>
        <taxon>Salmonella</taxon>
    </lineage>
</organism>
<accession>B5R8Z0</accession>
<reference key="1">
    <citation type="journal article" date="2008" name="Genome Res.">
        <title>Comparative genome analysis of Salmonella enteritidis PT4 and Salmonella gallinarum 287/91 provides insights into evolutionary and host adaptation pathways.</title>
        <authorList>
            <person name="Thomson N.R."/>
            <person name="Clayton D.J."/>
            <person name="Windhorst D."/>
            <person name="Vernikos G."/>
            <person name="Davidson S."/>
            <person name="Churcher C."/>
            <person name="Quail M.A."/>
            <person name="Stevens M."/>
            <person name="Jones M.A."/>
            <person name="Watson M."/>
            <person name="Barron A."/>
            <person name="Layton A."/>
            <person name="Pickard D."/>
            <person name="Kingsley R.A."/>
            <person name="Bignell A."/>
            <person name="Clark L."/>
            <person name="Harris B."/>
            <person name="Ormond D."/>
            <person name="Abdellah Z."/>
            <person name="Brooks K."/>
            <person name="Cherevach I."/>
            <person name="Chillingworth T."/>
            <person name="Woodward J."/>
            <person name="Norberczak H."/>
            <person name="Lord A."/>
            <person name="Arrowsmith C."/>
            <person name="Jagels K."/>
            <person name="Moule S."/>
            <person name="Mungall K."/>
            <person name="Saunders M."/>
            <person name="Whitehead S."/>
            <person name="Chabalgoity J.A."/>
            <person name="Maskell D."/>
            <person name="Humphreys T."/>
            <person name="Roberts M."/>
            <person name="Barrow P.A."/>
            <person name="Dougan G."/>
            <person name="Parkhill J."/>
        </authorList>
    </citation>
    <scope>NUCLEOTIDE SEQUENCE [LARGE SCALE GENOMIC DNA]</scope>
    <source>
        <strain>287/91 / NCTC 13346</strain>
    </source>
</reference>
<dbReference type="EMBL" id="AM933173">
    <property type="protein sequence ID" value="CAR37183.1"/>
    <property type="molecule type" value="Genomic_DNA"/>
</dbReference>
<dbReference type="SMR" id="B5R8Z0"/>
<dbReference type="KEGG" id="seg:SG1306"/>
<dbReference type="HOGENOM" id="CLU_109769_0_1_6"/>
<dbReference type="Proteomes" id="UP000008321">
    <property type="component" value="Chromosome"/>
</dbReference>
<dbReference type="HAMAP" id="MF_00676">
    <property type="entry name" value="UPF0260"/>
    <property type="match status" value="1"/>
</dbReference>
<dbReference type="InterPro" id="IPR005358">
    <property type="entry name" value="Puta_zinc/iron-chelating_dom"/>
</dbReference>
<dbReference type="InterPro" id="IPR008228">
    <property type="entry name" value="UCP006173"/>
</dbReference>
<dbReference type="NCBIfam" id="NF003498">
    <property type="entry name" value="PRK05170.1-1"/>
    <property type="match status" value="1"/>
</dbReference>
<dbReference type="NCBIfam" id="NF003501">
    <property type="entry name" value="PRK05170.1-5"/>
    <property type="match status" value="1"/>
</dbReference>
<dbReference type="NCBIfam" id="NF003503">
    <property type="entry name" value="PRK05170.2-1"/>
    <property type="match status" value="1"/>
</dbReference>
<dbReference type="NCBIfam" id="NF003507">
    <property type="entry name" value="PRK05170.2-5"/>
    <property type="match status" value="1"/>
</dbReference>
<dbReference type="PANTHER" id="PTHR37421">
    <property type="entry name" value="UPF0260 PROTEIN YCGN"/>
    <property type="match status" value="1"/>
</dbReference>
<dbReference type="PANTHER" id="PTHR37421:SF1">
    <property type="entry name" value="UPF0260 PROTEIN YCGN"/>
    <property type="match status" value="1"/>
</dbReference>
<dbReference type="Pfam" id="PF03692">
    <property type="entry name" value="CxxCxxCC"/>
    <property type="match status" value="1"/>
</dbReference>
<dbReference type="PIRSF" id="PIRSF006173">
    <property type="entry name" value="UCP006173"/>
    <property type="match status" value="1"/>
</dbReference>
<gene>
    <name evidence="1" type="primary">ycgN</name>
    <name type="ordered locus">SG1306</name>
</gene>
<evidence type="ECO:0000255" key="1">
    <source>
        <dbReference type="HAMAP-Rule" id="MF_00676"/>
    </source>
</evidence>
<comment type="similarity">
    <text evidence="1">Belongs to the UPF0260 family.</text>
</comment>
<sequence>MADTLMSDTPFWQRKTLDEMTDAEWESLCDGCGQCCLHKLMDEDTDEIYFTNVACRQLNIKTCQCRHYERRFEFEPDCIKLTRENLPDFEWLPMTCAYRLLAEGKPLPTWHPLLTGSKAAMHGERISVRHIAVKESEVRDWQDHILNKPSWAE</sequence>
<proteinExistence type="inferred from homology"/>
<feature type="chain" id="PRO_1000131633" description="UPF0260 protein YcgN">
    <location>
        <begin position="1"/>
        <end position="153"/>
    </location>
</feature>
<name>YCGN_SALG2</name>